<sequence length="413" mass="47663">MGTFCSVIKFENLQELKRLCHWGPIIALGVIAICSTMAMIDSVLWYWPLHTTGGSVNFIMLINWTVMILYNYFNAMFVGPGFVPLGWKPEISQDTMYLQYCKVCQAYKAPRSHHCRKCNRCVMKMDHHCPWINNCCGYQNHASFTLFLLLAPLGCIHAAFIFVMTMYTQLYHRLSFGWNTVKIDMSAARRDPLPIVPFGLAAFATTLFALGLALGTTIAVGMLFFIQMKIILRNKTSIESWIEEKAKDRIQYYQLDEVFVFPYDMGSRWRNFKQVFTWSGVPEGDGLEWPVREGCHQYSLTIEQLKQKADKRVRSVRYKVIEDYSGACCPLNKGIKTFFTSPCTEEPRIQLQKGEFILATRGLRYWLYGDKILDDSFIEGVSRIRGWFPRKCVEKCPCDAETDQAPEGEKKNR</sequence>
<proteinExistence type="inferred from homology"/>
<reference key="1">
    <citation type="submission" date="2004-11" db="EMBL/GenBank/DDBJ databases">
        <authorList>
            <consortium name="The German cDNA consortium"/>
        </authorList>
    </citation>
    <scope>NUCLEOTIDE SEQUENCE [LARGE SCALE MRNA]</scope>
    <source>
        <tissue>Kidney</tissue>
    </source>
</reference>
<organism>
    <name type="scientific">Pongo abelii</name>
    <name type="common">Sumatran orangutan</name>
    <name type="synonym">Pongo pygmaeus abelii</name>
    <dbReference type="NCBI Taxonomy" id="9601"/>
    <lineage>
        <taxon>Eukaryota</taxon>
        <taxon>Metazoa</taxon>
        <taxon>Chordata</taxon>
        <taxon>Craniata</taxon>
        <taxon>Vertebrata</taxon>
        <taxon>Euteleostomi</taxon>
        <taxon>Mammalia</taxon>
        <taxon>Eutheria</taxon>
        <taxon>Euarchontoglires</taxon>
        <taxon>Primates</taxon>
        <taxon>Haplorrhini</taxon>
        <taxon>Catarrhini</taxon>
        <taxon>Hominidae</taxon>
        <taxon>Pongo</taxon>
    </lineage>
</organism>
<protein>
    <recommendedName>
        <fullName evidence="2">Palmitoyltransferase ZDHHC6</fullName>
        <ecNumber evidence="2">2.3.1.225</ecNumber>
    </recommendedName>
    <alternativeName>
        <fullName evidence="6">Stearoyltransferase ZDHHC6</fullName>
        <ecNumber evidence="2">2.3.1.-</ecNumber>
    </alternativeName>
    <alternativeName>
        <fullName evidence="2">Zinc finger DHHC domain-containing protein 6</fullName>
        <shortName evidence="2">DHHC-6</shortName>
    </alternativeName>
</protein>
<name>ZDHC6_PONAB</name>
<feature type="chain" id="PRO_0000212873" description="Palmitoyltransferase ZDHHC6">
    <location>
        <begin position="1"/>
        <end position="413"/>
    </location>
</feature>
<feature type="topological domain" description="Cytoplasmic" evidence="6">
    <location>
        <begin position="1"/>
        <end position="24"/>
    </location>
</feature>
<feature type="transmembrane region" description="Helical" evidence="3">
    <location>
        <begin position="25"/>
        <end position="45"/>
    </location>
</feature>
<feature type="topological domain" description="Lumenal" evidence="6">
    <location>
        <begin position="46"/>
        <end position="57"/>
    </location>
</feature>
<feature type="transmembrane region" description="Helical" evidence="3">
    <location>
        <begin position="58"/>
        <end position="78"/>
    </location>
</feature>
<feature type="topological domain" description="Cytoplasmic" evidence="6">
    <location>
        <begin position="79"/>
        <end position="143"/>
    </location>
</feature>
<feature type="transmembrane region" description="Helical" evidence="3">
    <location>
        <begin position="144"/>
        <end position="164"/>
    </location>
</feature>
<feature type="topological domain" description="Lumenal" evidence="6">
    <location>
        <begin position="165"/>
        <end position="205"/>
    </location>
</feature>
<feature type="transmembrane region" description="Helical" evidence="3">
    <location>
        <begin position="206"/>
        <end position="226"/>
    </location>
</feature>
<feature type="topological domain" description="Cytoplasmic" evidence="6">
    <location>
        <begin position="227"/>
        <end position="413"/>
    </location>
</feature>
<feature type="domain" description="DHHC" evidence="4">
    <location>
        <begin position="99"/>
        <end position="149"/>
    </location>
</feature>
<feature type="domain" description="SH3" evidence="5">
    <location>
        <begin position="313"/>
        <end position="398"/>
    </location>
</feature>
<feature type="short sequence motif" description="Di-lysine motif" evidence="2">
    <location>
        <begin position="410"/>
        <end position="413"/>
    </location>
</feature>
<feature type="active site" description="S-palmitoyl cysteine intermediate" evidence="1">
    <location>
        <position position="129"/>
    </location>
</feature>
<feature type="lipid moiety-binding region" description="S-palmitoyl cysteine" evidence="2">
    <location>
        <position position="328"/>
    </location>
</feature>
<feature type="lipid moiety-binding region" description="S-palmitoyl cysteine" evidence="2">
    <location>
        <position position="329"/>
    </location>
</feature>
<feature type="lipid moiety-binding region" description="S-palmitoyl cysteine" evidence="2">
    <location>
        <position position="343"/>
    </location>
</feature>
<accession>Q5REH2</accession>
<keyword id="KW-0012">Acyltransferase</keyword>
<keyword id="KW-0256">Endoplasmic reticulum</keyword>
<keyword id="KW-0449">Lipoprotein</keyword>
<keyword id="KW-0472">Membrane</keyword>
<keyword id="KW-0564">Palmitate</keyword>
<keyword id="KW-1185">Reference proteome</keyword>
<keyword id="KW-0728">SH3 domain</keyword>
<keyword id="KW-0808">Transferase</keyword>
<keyword id="KW-0812">Transmembrane</keyword>
<keyword id="KW-1133">Transmembrane helix</keyword>
<gene>
    <name evidence="2" type="primary">ZDHHC6</name>
</gene>
<evidence type="ECO:0000250" key="1">
    <source>
        <dbReference type="UniProtKB" id="Q8IUH5"/>
    </source>
</evidence>
<evidence type="ECO:0000250" key="2">
    <source>
        <dbReference type="UniProtKB" id="Q9H6R6"/>
    </source>
</evidence>
<evidence type="ECO:0000255" key="3"/>
<evidence type="ECO:0000255" key="4">
    <source>
        <dbReference type="PROSITE-ProRule" id="PRU00067"/>
    </source>
</evidence>
<evidence type="ECO:0000255" key="5">
    <source>
        <dbReference type="PROSITE-ProRule" id="PRU00192"/>
    </source>
</evidence>
<evidence type="ECO:0000305" key="6"/>
<comment type="function">
    <text evidence="2">Endoplasmic reticulum palmitoyl acyltransferase that mediates palmitoylation of proteins such as AMFR, CALX, ITPR1 and TFRC (By similarity). Palmitoylates calnexin (CALX), which is required for its association with the ribosome-translocon complex and efficient folding of glycosylated proteins (By similarity). Mediates palmitoylation of AMFR, promoting AMFR distribution to the peripheral endoplasmic reticulum (By similarity). Together with SELENOK, palmitoylates ITPR1 in immune cells, leading to regulate ITPR1 stability and function (By similarity). Stearoyltransferase that mediates stearoylation of TFRC to inhibit TFRC-mediated activation of the JNK pathway and mitochondrial fragmentation (By similarity).</text>
</comment>
<comment type="catalytic activity">
    <reaction evidence="2">
        <text>L-cysteinyl-[protein] + hexadecanoyl-CoA = S-hexadecanoyl-L-cysteinyl-[protein] + CoA</text>
        <dbReference type="Rhea" id="RHEA:36683"/>
        <dbReference type="Rhea" id="RHEA-COMP:10131"/>
        <dbReference type="Rhea" id="RHEA-COMP:11032"/>
        <dbReference type="ChEBI" id="CHEBI:29950"/>
        <dbReference type="ChEBI" id="CHEBI:57287"/>
        <dbReference type="ChEBI" id="CHEBI:57379"/>
        <dbReference type="ChEBI" id="CHEBI:74151"/>
        <dbReference type="EC" id="2.3.1.225"/>
    </reaction>
    <physiologicalReaction direction="left-to-right" evidence="2">
        <dbReference type="Rhea" id="RHEA:36684"/>
    </physiologicalReaction>
</comment>
<comment type="catalytic activity">
    <reaction evidence="2">
        <text>L-cysteinyl-[protein] + octadecanoyl-CoA = S-octadecanoyl-L-cysteinyl-[protein] + CoA</text>
        <dbReference type="Rhea" id="RHEA:59740"/>
        <dbReference type="Rhea" id="RHEA-COMP:10131"/>
        <dbReference type="Rhea" id="RHEA-COMP:15434"/>
        <dbReference type="ChEBI" id="CHEBI:29950"/>
        <dbReference type="ChEBI" id="CHEBI:57287"/>
        <dbReference type="ChEBI" id="CHEBI:57394"/>
        <dbReference type="ChEBI" id="CHEBI:143200"/>
    </reaction>
    <physiologicalReaction direction="left-to-right" evidence="2">
        <dbReference type="Rhea" id="RHEA:59741"/>
    </physiologicalReaction>
</comment>
<comment type="subunit">
    <text evidence="2">Homooligomerizes. Interacts with SELENOK.</text>
</comment>
<comment type="subcellular location">
    <subcellularLocation>
        <location evidence="2">Endoplasmic reticulum membrane</location>
        <topology evidence="3">Multi-pass membrane protein</topology>
    </subcellularLocation>
    <text evidence="2">When not palmitoylated, accumulates to dot-like structures in the endoplasmic reticulum.</text>
</comment>
<comment type="domain">
    <text evidence="1">The DHHC domain is required for palmitoyltransferase activity.</text>
</comment>
<comment type="domain">
    <text evidence="2">The C-terminal di-lysine motif confers endoplasmic reticulum localization.</text>
</comment>
<comment type="PTM">
    <text evidence="2">Palmitoylated at 3 different sites by ZDHHC16. The combination of the different palmitoylation events strongly affects the quaternary assembly of ZDHHC6, its localization, stability and function. Palmitoylation at Cys-328 accelerates the turnover of ZDHHC6. Depalmitoylated by LYPLA2.</text>
</comment>
<comment type="similarity">
    <text evidence="6">Belongs to the DHHC palmitoyltransferase family.</text>
</comment>
<dbReference type="EC" id="2.3.1.225" evidence="2"/>
<dbReference type="EC" id="2.3.1.-" evidence="2"/>
<dbReference type="EMBL" id="CR857557">
    <property type="protein sequence ID" value="CAH89835.1"/>
    <property type="molecule type" value="Transcribed_RNA"/>
</dbReference>
<dbReference type="RefSeq" id="XP_002821195.1">
    <property type="nucleotide sequence ID" value="XM_002821149.5"/>
</dbReference>
<dbReference type="RefSeq" id="XP_024110016.1">
    <property type="nucleotide sequence ID" value="XM_024254248.3"/>
</dbReference>
<dbReference type="RefSeq" id="XP_024110017.1">
    <property type="nucleotide sequence ID" value="XM_024254249.3"/>
</dbReference>
<dbReference type="FunCoup" id="Q5REH2">
    <property type="interactions" value="2625"/>
</dbReference>
<dbReference type="STRING" id="9601.ENSPPYP00000003094"/>
<dbReference type="Ensembl" id="ENSPPYT00000003200.2">
    <property type="protein sequence ID" value="ENSPPYP00000003094.1"/>
    <property type="gene ID" value="ENSPPYG00000002658.2"/>
</dbReference>
<dbReference type="GeneID" id="100460911"/>
<dbReference type="KEGG" id="pon:100460911"/>
<dbReference type="CTD" id="64429"/>
<dbReference type="eggNOG" id="KOG1314">
    <property type="taxonomic scope" value="Eukaryota"/>
</dbReference>
<dbReference type="GeneTree" id="ENSGT00940000155642"/>
<dbReference type="HOGENOM" id="CLU_044394_1_0_1"/>
<dbReference type="InParanoid" id="Q5REH2"/>
<dbReference type="OMA" id="GCIHAAI"/>
<dbReference type="OrthoDB" id="331948at2759"/>
<dbReference type="TreeFam" id="TF320809"/>
<dbReference type="Proteomes" id="UP000001595">
    <property type="component" value="Chromosome 10"/>
</dbReference>
<dbReference type="GO" id="GO:0005783">
    <property type="term" value="C:endoplasmic reticulum"/>
    <property type="evidence" value="ECO:0000250"/>
    <property type="project" value="UniProtKB"/>
</dbReference>
<dbReference type="GO" id="GO:0005789">
    <property type="term" value="C:endoplasmic reticulum membrane"/>
    <property type="evidence" value="ECO:0007669"/>
    <property type="project" value="UniProtKB-SubCell"/>
</dbReference>
<dbReference type="GO" id="GO:0016409">
    <property type="term" value="F:palmitoyltransferase activity"/>
    <property type="evidence" value="ECO:0000250"/>
    <property type="project" value="UniProtKB"/>
</dbReference>
<dbReference type="GO" id="GO:0019706">
    <property type="term" value="F:protein-cysteine S-palmitoyltransferase activity"/>
    <property type="evidence" value="ECO:0007669"/>
    <property type="project" value="UniProtKB-EC"/>
</dbReference>
<dbReference type="GO" id="GO:0140439">
    <property type="term" value="F:protein-cysteine S-stearoyltransferase activity"/>
    <property type="evidence" value="ECO:0000250"/>
    <property type="project" value="UniProtKB"/>
</dbReference>
<dbReference type="GO" id="GO:0010636">
    <property type="term" value="P:positive regulation of mitochondrial fusion"/>
    <property type="evidence" value="ECO:0007669"/>
    <property type="project" value="Ensembl"/>
</dbReference>
<dbReference type="GO" id="GO:0018345">
    <property type="term" value="P:protein palmitoylation"/>
    <property type="evidence" value="ECO:0000250"/>
    <property type="project" value="UniProtKB"/>
</dbReference>
<dbReference type="GO" id="GO:0140438">
    <property type="term" value="P:protein stearoylation"/>
    <property type="evidence" value="ECO:0000250"/>
    <property type="project" value="UniProtKB"/>
</dbReference>
<dbReference type="InterPro" id="IPR001594">
    <property type="entry name" value="Palmitoyltrfase_DHHC"/>
</dbReference>
<dbReference type="InterPro" id="IPR039859">
    <property type="entry name" value="PFA4/ZDH16/20/ERF2-like"/>
</dbReference>
<dbReference type="InterPro" id="IPR001452">
    <property type="entry name" value="SH3_domain"/>
</dbReference>
<dbReference type="PANTHER" id="PTHR12246">
    <property type="entry name" value="PALMITOYLTRANSFERASE ZDHHC16"/>
    <property type="match status" value="1"/>
</dbReference>
<dbReference type="Pfam" id="PF01529">
    <property type="entry name" value="DHHC"/>
    <property type="match status" value="1"/>
</dbReference>
<dbReference type="Pfam" id="PF07653">
    <property type="entry name" value="SH3_2"/>
    <property type="match status" value="1"/>
</dbReference>
<dbReference type="PROSITE" id="PS50216">
    <property type="entry name" value="DHHC"/>
    <property type="match status" value="1"/>
</dbReference>
<dbReference type="PROSITE" id="PS50002">
    <property type="entry name" value="SH3"/>
    <property type="match status" value="1"/>
</dbReference>